<dbReference type="EC" id="4.2.3.159" evidence="2 3"/>
<dbReference type="EMBL" id="CP029159">
    <property type="protein sequence ID" value="EIF90392.1"/>
    <property type="molecule type" value="Genomic_DNA"/>
</dbReference>
<dbReference type="RefSeq" id="WP_006348711.1">
    <property type="nucleotide sequence ID" value="NZ_CP029159.1"/>
</dbReference>
<dbReference type="SMR" id="I2N045"/>
<dbReference type="PATRIC" id="fig|1114943.5.peg.4282"/>
<dbReference type="BRENDA" id="4.2.3.159">
    <property type="organism ID" value="14835"/>
</dbReference>
<dbReference type="Proteomes" id="UP000005940">
    <property type="component" value="Chromosome"/>
</dbReference>
<dbReference type="GO" id="GO:0000287">
    <property type="term" value="F:magnesium ion binding"/>
    <property type="evidence" value="ECO:0000250"/>
    <property type="project" value="UniProtKB"/>
</dbReference>
<dbReference type="GO" id="GO:0010333">
    <property type="term" value="F:terpene synthase activity"/>
    <property type="evidence" value="ECO:0000314"/>
    <property type="project" value="UniProtKB"/>
</dbReference>
<dbReference type="Gene3D" id="1.10.600.10">
    <property type="entry name" value="Farnesyl Diphosphate Synthase"/>
    <property type="match status" value="1"/>
</dbReference>
<dbReference type="InterPro" id="IPR008949">
    <property type="entry name" value="Isoprenoid_synthase_dom_sf"/>
</dbReference>
<dbReference type="InterPro" id="IPR034686">
    <property type="entry name" value="Terpene_cyclase-like_2"/>
</dbReference>
<dbReference type="PANTHER" id="PTHR35201:SF4">
    <property type="entry name" value="BETA-PINACENE SYNTHASE-RELATED"/>
    <property type="match status" value="1"/>
</dbReference>
<dbReference type="PANTHER" id="PTHR35201">
    <property type="entry name" value="TERPENE SYNTHASE"/>
    <property type="match status" value="1"/>
</dbReference>
<dbReference type="Pfam" id="PF19086">
    <property type="entry name" value="Terpene_syn_C_2"/>
    <property type="match status" value="1"/>
</dbReference>
<dbReference type="SUPFAM" id="SSF48576">
    <property type="entry name" value="Terpenoid synthases"/>
    <property type="match status" value="1"/>
</dbReference>
<keyword id="KW-0456">Lyase</keyword>
<keyword id="KW-0460">Magnesium</keyword>
<keyword id="KW-0479">Metal-binding</keyword>
<gene>
    <name evidence="7" type="ORF">STSU_20912</name>
</gene>
<sequence>MIEVPPFWCPLPIAIHPAADQAEKDARAWAERYGVRLRIADQVQPGRLGAYWAPHGTYEGMLAVGCWNFWAFAFDDHLDEPLPLDVPVTTSLVQQAVDIPSPPITDDPWAAGAQAVFNMFRDLATPTQVRYCADNHRRWLHGACWRHSNHVNRRLPPLAEYIPLRMQDAAAQATCLIAVLIGSDISVPEQEMDSPRVRALLETASWTATIDSDLHSFQLEDTQRPVSQHIVSVLMHERGIGVDEALRQSVALRDRFMTRFLHLQQECARTGSSELARFAHTLGYVISGYLQWAVDTSRYGQTEATFSFTDTPRDDTPEPPPGIPSVEWLWTL</sequence>
<comment type="function">
    <text evidence="2 3">Catalyzes the formation of the 5-9-5 ring skeleton (3S,6S,11R,14S)-tsukubadiene from geranylgeranyl diphosphate (GGPP) via a 1,11-cyclization and a 10Re,14Re-cyclization.</text>
</comment>
<comment type="catalytic activity">
    <reaction evidence="2 3">
        <text>(2E,6E,10E)-geranylgeranyl diphosphate = tsukubadiene + diphosphate</text>
        <dbReference type="Rhea" id="RHEA:53624"/>
        <dbReference type="ChEBI" id="CHEBI:33019"/>
        <dbReference type="ChEBI" id="CHEBI:58756"/>
        <dbReference type="ChEBI" id="CHEBI:137528"/>
        <dbReference type="EC" id="4.2.3.159"/>
    </reaction>
</comment>
<comment type="cofactor">
    <cofactor evidence="1">
        <name>Mg(2+)</name>
        <dbReference type="ChEBI" id="CHEBI:18420"/>
    </cofactor>
    <text evidence="1">Binds 3 Mg(2+) ions per subunit.</text>
</comment>
<comment type="domain">
    <text evidence="6">The Asp-Asp-Xaa-Xaa-Xaa-Glu (DDXXXE) and Ser-Xaa-Xaa-Xaa-Ser-Xaa-Xaa-Xaa-Glu (SSE) motifs are important for the catalytic activity, presumably through binding to Mg(2+).</text>
</comment>
<comment type="similarity">
    <text evidence="5">Belongs to the terpene synthase family.</text>
</comment>
<feature type="chain" id="PRO_0000444977" description="Tsukubadiene synthase">
    <location>
        <begin position="1"/>
        <end position="332"/>
    </location>
</feature>
<feature type="short sequence motif" description="DDXXXE motif" evidence="6">
    <location>
        <begin position="75"/>
        <end position="80"/>
    </location>
</feature>
<feature type="short sequence motif" description="SXXXSXXXE motif" evidence="6">
    <location>
        <begin position="212"/>
        <end position="220"/>
    </location>
</feature>
<feature type="binding site" evidence="1">
    <location>
        <position position="75"/>
    </location>
    <ligand>
        <name>Mg(2+)</name>
        <dbReference type="ChEBI" id="CHEBI:18420"/>
        <label>1</label>
    </ligand>
</feature>
<feature type="binding site" evidence="1">
    <location>
        <position position="80"/>
    </location>
    <ligand>
        <name>Mg(2+)</name>
        <dbReference type="ChEBI" id="CHEBI:18420"/>
        <label>1</label>
    </ligand>
</feature>
<feature type="binding site" evidence="1">
    <location>
        <position position="80"/>
    </location>
    <ligand>
        <name>Mg(2+)</name>
        <dbReference type="ChEBI" id="CHEBI:18420"/>
        <label>2</label>
    </ligand>
</feature>
<feature type="binding site" evidence="1">
    <location>
        <position position="165"/>
    </location>
    <ligand>
        <name>substrate</name>
    </ligand>
</feature>
<feature type="binding site" evidence="1">
    <location>
        <position position="212"/>
    </location>
    <ligand>
        <name>Mg(2+)</name>
        <dbReference type="ChEBI" id="CHEBI:18420"/>
        <label>3</label>
    </ligand>
</feature>
<feature type="binding site" evidence="1">
    <location>
        <position position="216"/>
    </location>
    <ligand>
        <name>Mg(2+)</name>
        <dbReference type="ChEBI" id="CHEBI:18420"/>
        <label>3</label>
    </ligand>
</feature>
<feature type="binding site" evidence="1">
    <location>
        <position position="220"/>
    </location>
    <ligand>
        <name>Mg(2+)</name>
        <dbReference type="ChEBI" id="CHEBI:18420"/>
        <label>3</label>
    </ligand>
</feature>
<feature type="binding site" evidence="1">
    <location>
        <begin position="298"/>
        <end position="299"/>
    </location>
    <ligand>
        <name>substrate</name>
    </ligand>
</feature>
<reference key="1">
    <citation type="journal article" date="2012" name="J. Bacteriol.">
        <title>Draft genome of Streptomyces tsukubaensis NRRL 18488, the producer of the clinically important immunosuppressant tacrolimus (FK506).</title>
        <authorList>
            <person name="Barreiro C."/>
            <person name="Prieto C."/>
            <person name="Sola-Landa A."/>
            <person name="Solera E."/>
            <person name="Martinez-Castro M."/>
            <person name="Perez-Redondo R."/>
            <person name="Garcia-Estrada C."/>
            <person name="Aparicio J.F."/>
            <person name="Fernandez-Martinez L.T."/>
            <person name="Santos-Aberturas J."/>
            <person name="Salehi-Najafabadi Z."/>
            <person name="Rodriguez-Garcia A."/>
            <person name="Tauch A."/>
            <person name="Martin J.F."/>
        </authorList>
    </citation>
    <scope>NUCLEOTIDE SEQUENCE [LARGE SCALE GENOMIC DNA]</scope>
    <source>
        <strain>DSM 42081 / NBRC 108919 / NRRL 18488 / 9993</strain>
    </source>
</reference>
<reference key="2">
    <citation type="journal article" date="2015" name="J. Antibiot.">
        <title>Novel terpenes generated by heterologous expression of bacterial terpene synthase genes in an engineered Streptomyces host.</title>
        <authorList>
            <person name="Yamada Y."/>
            <person name="Arima S."/>
            <person name="Nagamitsu T."/>
            <person name="Johmoto K."/>
            <person name="Uekusa H."/>
            <person name="Eguchi T."/>
            <person name="Shin-ya K."/>
            <person name="Cane D.E."/>
            <person name="Ikeda H."/>
        </authorList>
    </citation>
    <scope>FUNCTION</scope>
    <scope>CATALYTIC ACTIVITY</scope>
    <source>
        <strain>DSM 42081 / NBRC 108919 / NRRL 18488 / 9993</strain>
    </source>
</reference>
<reference key="3">
    <citation type="journal article" date="2017" name="Angew. Chem. Int. Ed.">
        <title>Mechanistic investigations of two bacterial diterpene cyclases: spiroviolene synthase and tsukubadiene synthase.</title>
        <authorList>
            <person name="Rabe P."/>
            <person name="Rinkel J."/>
            <person name="Dolja E."/>
            <person name="Schmitz T."/>
            <person name="Nubbemeyer B."/>
            <person name="Luu T.H."/>
            <person name="Dickschat J.S."/>
        </authorList>
    </citation>
    <scope>FUNCTION</scope>
    <scope>CATALYTIC ACTIVITY</scope>
    <scope>DOMAIN</scope>
    <scope>REACTION MECHANISM</scope>
    <source>
        <strain>DSM 42081 / NBRC 108919 / NRRL 18488 / 9993</strain>
    </source>
</reference>
<accession>I2N045</accession>
<name>TSUKU_STRT9</name>
<evidence type="ECO:0000250" key="1">
    <source>
        <dbReference type="UniProtKB" id="B5HDJ6"/>
    </source>
</evidence>
<evidence type="ECO:0000269" key="2">
    <source>
    </source>
</evidence>
<evidence type="ECO:0000269" key="3">
    <source>
    </source>
</evidence>
<evidence type="ECO:0000303" key="4">
    <source>
    </source>
</evidence>
<evidence type="ECO:0000305" key="5"/>
<evidence type="ECO:0000305" key="6">
    <source>
    </source>
</evidence>
<evidence type="ECO:0000312" key="7">
    <source>
        <dbReference type="EMBL" id="EIF90392.1"/>
    </source>
</evidence>
<proteinExistence type="evidence at protein level"/>
<protein>
    <recommendedName>
        <fullName evidence="4">Tsukubadiene synthase</fullName>
        <shortName evidence="4">TdS</shortName>
        <ecNumber evidence="2 3">4.2.3.159</ecNumber>
    </recommendedName>
</protein>
<organism>
    <name type="scientific">Streptomyces tsukubensis (strain DSM 42081 / NBRC 108919 / NRRL 18488 / 9993)</name>
    <dbReference type="NCBI Taxonomy" id="1114943"/>
    <lineage>
        <taxon>Bacteria</taxon>
        <taxon>Bacillati</taxon>
        <taxon>Actinomycetota</taxon>
        <taxon>Actinomycetes</taxon>
        <taxon>Kitasatosporales</taxon>
        <taxon>Streptomycetaceae</taxon>
        <taxon>Streptomyces</taxon>
    </lineage>
</organism>